<feature type="chain" id="PRO_0000368430" description="ATP synthase subunit b">
    <location>
        <begin position="1"/>
        <end position="159"/>
    </location>
</feature>
<feature type="transmembrane region" description="Helical" evidence="1">
    <location>
        <begin position="8"/>
        <end position="28"/>
    </location>
</feature>
<sequence>MEIDFMRILATIINFIILILILKHFFWDKIKRAIDARQEAIDETILKADEDAEKARRLRLDNERILKSAKEEGRKLREEQKKEADRIYKEIVDDAHREAEAIINRANIEIQREEEKVKYELKQQVVDISVMLSEKALGESIDESKHRELINDFIEKVGI</sequence>
<comment type="function">
    <text evidence="1">F(1)F(0) ATP synthase produces ATP from ADP in the presence of a proton or sodium gradient. F-type ATPases consist of two structural domains, F(1) containing the extramembraneous catalytic core and F(0) containing the membrane proton channel, linked together by a central stalk and a peripheral stalk. During catalysis, ATP synthesis in the catalytic domain of F(1) is coupled via a rotary mechanism of the central stalk subunits to proton translocation.</text>
</comment>
<comment type="function">
    <text evidence="1">Component of the F(0) channel, it forms part of the peripheral stalk, linking F(1) to F(0).</text>
</comment>
<comment type="subunit">
    <text evidence="1">F-type ATPases have 2 components, F(1) - the catalytic core - and F(0) - the membrane proton channel. F(1) has five subunits: alpha(3), beta(3), gamma(1), delta(1), epsilon(1). F(0) has three main subunits: a(1), b(2) and c(10-14). The alpha and beta chains form an alternating ring which encloses part of the gamma chain. F(1) is attached to F(0) by a central stalk formed by the gamma and epsilon chains, while a peripheral stalk is formed by the delta and b chains.</text>
</comment>
<comment type="subcellular location">
    <subcellularLocation>
        <location evidence="1">Cell membrane</location>
        <topology evidence="1">Single-pass membrane protein</topology>
    </subcellularLocation>
</comment>
<comment type="similarity">
    <text evidence="1">Belongs to the ATPase B chain family.</text>
</comment>
<reference key="1">
    <citation type="journal article" date="2002" name="Proc. Natl. Acad. Sci. U.S.A.">
        <title>Complete genome sequence of Clostridium perfringens, an anaerobic flesh-eater.</title>
        <authorList>
            <person name="Shimizu T."/>
            <person name="Ohtani K."/>
            <person name="Hirakawa H."/>
            <person name="Ohshima K."/>
            <person name="Yamashita A."/>
            <person name="Shiba T."/>
            <person name="Ogasawara N."/>
            <person name="Hattori M."/>
            <person name="Kuhara S."/>
            <person name="Hayashi H."/>
        </authorList>
    </citation>
    <scope>NUCLEOTIDE SEQUENCE [LARGE SCALE GENOMIC DNA]</scope>
    <source>
        <strain>13 / Type A</strain>
    </source>
</reference>
<accession>Q8XID0</accession>
<evidence type="ECO:0000255" key="1">
    <source>
        <dbReference type="HAMAP-Rule" id="MF_01398"/>
    </source>
</evidence>
<gene>
    <name evidence="1" type="primary">atpF</name>
    <name type="ordered locus">CPE2191</name>
</gene>
<organism>
    <name type="scientific">Clostridium perfringens (strain 13 / Type A)</name>
    <dbReference type="NCBI Taxonomy" id="195102"/>
    <lineage>
        <taxon>Bacteria</taxon>
        <taxon>Bacillati</taxon>
        <taxon>Bacillota</taxon>
        <taxon>Clostridia</taxon>
        <taxon>Eubacteriales</taxon>
        <taxon>Clostridiaceae</taxon>
        <taxon>Clostridium</taxon>
    </lineage>
</organism>
<keyword id="KW-0066">ATP synthesis</keyword>
<keyword id="KW-1003">Cell membrane</keyword>
<keyword id="KW-0138">CF(0)</keyword>
<keyword id="KW-0375">Hydrogen ion transport</keyword>
<keyword id="KW-0406">Ion transport</keyword>
<keyword id="KW-0472">Membrane</keyword>
<keyword id="KW-1185">Reference proteome</keyword>
<keyword id="KW-0812">Transmembrane</keyword>
<keyword id="KW-1133">Transmembrane helix</keyword>
<keyword id="KW-0813">Transport</keyword>
<name>ATPF_CLOPE</name>
<proteinExistence type="inferred from homology"/>
<protein>
    <recommendedName>
        <fullName evidence="1">ATP synthase subunit b</fullName>
    </recommendedName>
    <alternativeName>
        <fullName evidence="1">ATP synthase F(0) sector subunit b</fullName>
    </alternativeName>
    <alternativeName>
        <fullName evidence="1">ATPase subunit I</fullName>
    </alternativeName>
    <alternativeName>
        <fullName evidence="1">F-type ATPase subunit b</fullName>
        <shortName evidence="1">F-ATPase subunit b</shortName>
    </alternativeName>
</protein>
<dbReference type="EMBL" id="BA000016">
    <property type="protein sequence ID" value="BAB81897.1"/>
    <property type="molecule type" value="Genomic_DNA"/>
</dbReference>
<dbReference type="RefSeq" id="WP_003452454.1">
    <property type="nucleotide sequence ID" value="NC_003366.1"/>
</dbReference>
<dbReference type="SMR" id="Q8XID0"/>
<dbReference type="STRING" id="195102.gene:10491470"/>
<dbReference type="KEGG" id="cpe:CPE2191"/>
<dbReference type="HOGENOM" id="CLU_079215_4_0_9"/>
<dbReference type="Proteomes" id="UP000000818">
    <property type="component" value="Chromosome"/>
</dbReference>
<dbReference type="GO" id="GO:0005886">
    <property type="term" value="C:plasma membrane"/>
    <property type="evidence" value="ECO:0007669"/>
    <property type="project" value="UniProtKB-SubCell"/>
</dbReference>
<dbReference type="GO" id="GO:0045259">
    <property type="term" value="C:proton-transporting ATP synthase complex"/>
    <property type="evidence" value="ECO:0007669"/>
    <property type="project" value="UniProtKB-KW"/>
</dbReference>
<dbReference type="GO" id="GO:0046933">
    <property type="term" value="F:proton-transporting ATP synthase activity, rotational mechanism"/>
    <property type="evidence" value="ECO:0007669"/>
    <property type="project" value="UniProtKB-UniRule"/>
</dbReference>
<dbReference type="GO" id="GO:0046961">
    <property type="term" value="F:proton-transporting ATPase activity, rotational mechanism"/>
    <property type="evidence" value="ECO:0007669"/>
    <property type="project" value="TreeGrafter"/>
</dbReference>
<dbReference type="CDD" id="cd06503">
    <property type="entry name" value="ATP-synt_Fo_b"/>
    <property type="match status" value="1"/>
</dbReference>
<dbReference type="Gene3D" id="1.20.5.620">
    <property type="entry name" value="F1F0 ATP synthase subunit B, membrane domain"/>
    <property type="match status" value="1"/>
</dbReference>
<dbReference type="HAMAP" id="MF_01398">
    <property type="entry name" value="ATP_synth_b_bprime"/>
    <property type="match status" value="1"/>
</dbReference>
<dbReference type="InterPro" id="IPR028987">
    <property type="entry name" value="ATP_synth_B-like_membr_sf"/>
</dbReference>
<dbReference type="InterPro" id="IPR002146">
    <property type="entry name" value="ATP_synth_b/b'su_bac/chlpt"/>
</dbReference>
<dbReference type="InterPro" id="IPR005864">
    <property type="entry name" value="ATP_synth_F0_bsu_bac"/>
</dbReference>
<dbReference type="InterPro" id="IPR050059">
    <property type="entry name" value="ATP_synthase_B_chain"/>
</dbReference>
<dbReference type="NCBIfam" id="TIGR01144">
    <property type="entry name" value="ATP_synt_b"/>
    <property type="match status" value="1"/>
</dbReference>
<dbReference type="NCBIfam" id="NF009992">
    <property type="entry name" value="PRK13461.1"/>
    <property type="match status" value="1"/>
</dbReference>
<dbReference type="PANTHER" id="PTHR33445:SF1">
    <property type="entry name" value="ATP SYNTHASE SUBUNIT B"/>
    <property type="match status" value="1"/>
</dbReference>
<dbReference type="PANTHER" id="PTHR33445">
    <property type="entry name" value="ATP SYNTHASE SUBUNIT B', CHLOROPLASTIC"/>
    <property type="match status" value="1"/>
</dbReference>
<dbReference type="Pfam" id="PF00430">
    <property type="entry name" value="ATP-synt_B"/>
    <property type="match status" value="1"/>
</dbReference>
<dbReference type="SUPFAM" id="SSF81573">
    <property type="entry name" value="F1F0 ATP synthase subunit B, membrane domain"/>
    <property type="match status" value="1"/>
</dbReference>